<keyword id="KW-0028">Amino-acid biosynthesis</keyword>
<keyword id="KW-0057">Aromatic amino acid biosynthesis</keyword>
<keyword id="KW-0963">Cytoplasm</keyword>
<keyword id="KW-1185">Reference proteome</keyword>
<keyword id="KW-0808">Transferase</keyword>
<dbReference type="EC" id="2.5.1.19" evidence="1"/>
<dbReference type="EMBL" id="CP000023">
    <property type="protein sequence ID" value="AAV60351.1"/>
    <property type="molecule type" value="Genomic_DNA"/>
</dbReference>
<dbReference type="RefSeq" id="WP_011225715.1">
    <property type="nucleotide sequence ID" value="NC_006448.1"/>
</dbReference>
<dbReference type="SMR" id="Q5M551"/>
<dbReference type="STRING" id="264199.stu0645"/>
<dbReference type="KEGG" id="stl:stu0645"/>
<dbReference type="PATRIC" id="fig|264199.4.peg.654"/>
<dbReference type="eggNOG" id="COG0128">
    <property type="taxonomic scope" value="Bacteria"/>
</dbReference>
<dbReference type="HOGENOM" id="CLU_024321_0_1_9"/>
<dbReference type="UniPathway" id="UPA00053">
    <property type="reaction ID" value="UER00089"/>
</dbReference>
<dbReference type="Proteomes" id="UP000001170">
    <property type="component" value="Chromosome"/>
</dbReference>
<dbReference type="GO" id="GO:0005737">
    <property type="term" value="C:cytoplasm"/>
    <property type="evidence" value="ECO:0007669"/>
    <property type="project" value="UniProtKB-SubCell"/>
</dbReference>
<dbReference type="GO" id="GO:0003866">
    <property type="term" value="F:3-phosphoshikimate 1-carboxyvinyltransferase activity"/>
    <property type="evidence" value="ECO:0007669"/>
    <property type="project" value="UniProtKB-UniRule"/>
</dbReference>
<dbReference type="GO" id="GO:0008652">
    <property type="term" value="P:amino acid biosynthetic process"/>
    <property type="evidence" value="ECO:0007669"/>
    <property type="project" value="UniProtKB-KW"/>
</dbReference>
<dbReference type="GO" id="GO:0009073">
    <property type="term" value="P:aromatic amino acid family biosynthetic process"/>
    <property type="evidence" value="ECO:0007669"/>
    <property type="project" value="UniProtKB-KW"/>
</dbReference>
<dbReference type="GO" id="GO:0009423">
    <property type="term" value="P:chorismate biosynthetic process"/>
    <property type="evidence" value="ECO:0007669"/>
    <property type="project" value="UniProtKB-UniRule"/>
</dbReference>
<dbReference type="CDD" id="cd01556">
    <property type="entry name" value="EPSP_synthase"/>
    <property type="match status" value="1"/>
</dbReference>
<dbReference type="FunFam" id="3.65.10.10:FF:000005">
    <property type="entry name" value="3-phosphoshikimate 1-carboxyvinyltransferase"/>
    <property type="match status" value="1"/>
</dbReference>
<dbReference type="FunFam" id="3.65.10.10:FF:000006">
    <property type="entry name" value="3-phosphoshikimate 1-carboxyvinyltransferase"/>
    <property type="match status" value="1"/>
</dbReference>
<dbReference type="Gene3D" id="3.65.10.10">
    <property type="entry name" value="Enolpyruvate transferase domain"/>
    <property type="match status" value="2"/>
</dbReference>
<dbReference type="HAMAP" id="MF_00210">
    <property type="entry name" value="EPSP_synth"/>
    <property type="match status" value="1"/>
</dbReference>
<dbReference type="InterPro" id="IPR001986">
    <property type="entry name" value="Enolpyruvate_Tfrase_dom"/>
</dbReference>
<dbReference type="InterPro" id="IPR036968">
    <property type="entry name" value="Enolpyruvate_Tfrase_sf"/>
</dbReference>
<dbReference type="InterPro" id="IPR006264">
    <property type="entry name" value="EPSP_synthase"/>
</dbReference>
<dbReference type="InterPro" id="IPR023193">
    <property type="entry name" value="EPSP_synthase_CS"/>
</dbReference>
<dbReference type="InterPro" id="IPR013792">
    <property type="entry name" value="RNA3'P_cycl/enolpyr_Trfase_a/b"/>
</dbReference>
<dbReference type="NCBIfam" id="TIGR01356">
    <property type="entry name" value="aroA"/>
    <property type="match status" value="1"/>
</dbReference>
<dbReference type="PANTHER" id="PTHR21090">
    <property type="entry name" value="AROM/DEHYDROQUINATE SYNTHASE"/>
    <property type="match status" value="1"/>
</dbReference>
<dbReference type="PANTHER" id="PTHR21090:SF5">
    <property type="entry name" value="PENTAFUNCTIONAL AROM POLYPEPTIDE"/>
    <property type="match status" value="1"/>
</dbReference>
<dbReference type="Pfam" id="PF00275">
    <property type="entry name" value="EPSP_synthase"/>
    <property type="match status" value="1"/>
</dbReference>
<dbReference type="PIRSF" id="PIRSF000505">
    <property type="entry name" value="EPSPS"/>
    <property type="match status" value="1"/>
</dbReference>
<dbReference type="SUPFAM" id="SSF55205">
    <property type="entry name" value="EPT/RTPC-like"/>
    <property type="match status" value="1"/>
</dbReference>
<dbReference type="PROSITE" id="PS00104">
    <property type="entry name" value="EPSP_SYNTHASE_1"/>
    <property type="match status" value="1"/>
</dbReference>
<dbReference type="PROSITE" id="PS00885">
    <property type="entry name" value="EPSP_SYNTHASE_2"/>
    <property type="match status" value="1"/>
</dbReference>
<protein>
    <recommendedName>
        <fullName evidence="1">3-phosphoshikimate 1-carboxyvinyltransferase</fullName>
        <ecNumber evidence="1">2.5.1.19</ecNumber>
    </recommendedName>
    <alternativeName>
        <fullName evidence="1">5-enolpyruvylshikimate-3-phosphate synthase</fullName>
        <shortName evidence="1">EPSP synthase</shortName>
        <shortName evidence="1">EPSPS</shortName>
    </alternativeName>
</protein>
<accession>Q5M551</accession>
<proteinExistence type="inferred from homology"/>
<sequence length="427" mass="45897">MKLETKAQGLRGSLRIPGDKSISHRSIMFGSLAKGVTTVRDILRGEDVLSTMQVFRDLGVTIEDDGDVVRIHGVGFDGLKAPQNKLDMGNSGTSIRLISGVLAGQDFDVEMFGDDSLSKRPMDRVTIPLRQMGVEVSGQTDRDLPPLKMHGSKSLKPIHYELPVASAQVKSALIFAALQADGESVIIEKEKTRNHTEDMIQQFGGQLQVEGKEIRISGGQTFTAQEVVVPGDISSAAFWLVAGLVVPNSKIVLKNVGINETRTGVIDVIKDMGGKIKLSDIDQVAKSATITVETSELKGTEIGGDIIPRLIDELPIITLLATQAQGKTVIRDAEELKVKETDRIQVVADALNAMGADIVPTEDGMIITGKTPLHGAEVNTFGDHRIGMMTAIAALLVQDGEVDLQRAEAINTSYPSFFSDLEGLLHG</sequence>
<organism>
    <name type="scientific">Streptococcus thermophilus (strain ATCC BAA-250 / LMG 18311)</name>
    <dbReference type="NCBI Taxonomy" id="264199"/>
    <lineage>
        <taxon>Bacteria</taxon>
        <taxon>Bacillati</taxon>
        <taxon>Bacillota</taxon>
        <taxon>Bacilli</taxon>
        <taxon>Lactobacillales</taxon>
        <taxon>Streptococcaceae</taxon>
        <taxon>Streptococcus</taxon>
    </lineage>
</organism>
<gene>
    <name evidence="1" type="primary">aroA</name>
    <name type="ordered locus">stu0645</name>
</gene>
<feature type="chain" id="PRO_1000012500" description="3-phosphoshikimate 1-carboxyvinyltransferase">
    <location>
        <begin position="1"/>
        <end position="427"/>
    </location>
</feature>
<feature type="active site" description="Proton acceptor" evidence="1">
    <location>
        <position position="312"/>
    </location>
</feature>
<feature type="binding site" evidence="1">
    <location>
        <position position="20"/>
    </location>
    <ligand>
        <name>3-phosphoshikimate</name>
        <dbReference type="ChEBI" id="CHEBI:145989"/>
    </ligand>
</feature>
<feature type="binding site" evidence="1">
    <location>
        <position position="20"/>
    </location>
    <ligand>
        <name>phosphoenolpyruvate</name>
        <dbReference type="ChEBI" id="CHEBI:58702"/>
    </ligand>
</feature>
<feature type="binding site" evidence="1">
    <location>
        <position position="21"/>
    </location>
    <ligand>
        <name>3-phosphoshikimate</name>
        <dbReference type="ChEBI" id="CHEBI:145989"/>
    </ligand>
</feature>
<feature type="binding site" evidence="1">
    <location>
        <position position="25"/>
    </location>
    <ligand>
        <name>3-phosphoshikimate</name>
        <dbReference type="ChEBI" id="CHEBI:145989"/>
    </ligand>
</feature>
<feature type="binding site" evidence="1">
    <location>
        <position position="92"/>
    </location>
    <ligand>
        <name>phosphoenolpyruvate</name>
        <dbReference type="ChEBI" id="CHEBI:58702"/>
    </ligand>
</feature>
<feature type="binding site" evidence="1">
    <location>
        <position position="120"/>
    </location>
    <ligand>
        <name>phosphoenolpyruvate</name>
        <dbReference type="ChEBI" id="CHEBI:58702"/>
    </ligand>
</feature>
<feature type="binding site" evidence="1">
    <location>
        <position position="166"/>
    </location>
    <ligand>
        <name>3-phosphoshikimate</name>
        <dbReference type="ChEBI" id="CHEBI:145989"/>
    </ligand>
</feature>
<feature type="binding site" evidence="1">
    <location>
        <position position="168"/>
    </location>
    <ligand>
        <name>3-phosphoshikimate</name>
        <dbReference type="ChEBI" id="CHEBI:145989"/>
    </ligand>
</feature>
<feature type="binding site" evidence="1">
    <location>
        <position position="168"/>
    </location>
    <ligand>
        <name>phosphoenolpyruvate</name>
        <dbReference type="ChEBI" id="CHEBI:58702"/>
    </ligand>
</feature>
<feature type="binding site" evidence="1">
    <location>
        <position position="312"/>
    </location>
    <ligand>
        <name>3-phosphoshikimate</name>
        <dbReference type="ChEBI" id="CHEBI:145989"/>
    </ligand>
</feature>
<feature type="binding site" evidence="1">
    <location>
        <position position="339"/>
    </location>
    <ligand>
        <name>3-phosphoshikimate</name>
        <dbReference type="ChEBI" id="CHEBI:145989"/>
    </ligand>
</feature>
<feature type="binding site" evidence="1">
    <location>
        <position position="343"/>
    </location>
    <ligand>
        <name>phosphoenolpyruvate</name>
        <dbReference type="ChEBI" id="CHEBI:58702"/>
    </ligand>
</feature>
<feature type="binding site" evidence="1">
    <location>
        <position position="385"/>
    </location>
    <ligand>
        <name>phosphoenolpyruvate</name>
        <dbReference type="ChEBI" id="CHEBI:58702"/>
    </ligand>
</feature>
<reference key="1">
    <citation type="journal article" date="2004" name="Nat. Biotechnol.">
        <title>Complete sequence and comparative genome analysis of the dairy bacterium Streptococcus thermophilus.</title>
        <authorList>
            <person name="Bolotin A."/>
            <person name="Quinquis B."/>
            <person name="Renault P."/>
            <person name="Sorokin A."/>
            <person name="Ehrlich S.D."/>
            <person name="Kulakauskas S."/>
            <person name="Lapidus A."/>
            <person name="Goltsman E."/>
            <person name="Mazur M."/>
            <person name="Pusch G.D."/>
            <person name="Fonstein M."/>
            <person name="Overbeek R."/>
            <person name="Kyprides N."/>
            <person name="Purnelle B."/>
            <person name="Prozzi D."/>
            <person name="Ngui K."/>
            <person name="Masuy D."/>
            <person name="Hancy F."/>
            <person name="Burteau S."/>
            <person name="Boutry M."/>
            <person name="Delcour J."/>
            <person name="Goffeau A."/>
            <person name="Hols P."/>
        </authorList>
    </citation>
    <scope>NUCLEOTIDE SEQUENCE [LARGE SCALE GENOMIC DNA]</scope>
    <source>
        <strain>ATCC BAA-250 / LMG 18311</strain>
    </source>
</reference>
<comment type="function">
    <text evidence="1">Catalyzes the transfer of the enolpyruvyl moiety of phosphoenolpyruvate (PEP) to the 5-hydroxyl of shikimate-3-phosphate (S3P) to produce enolpyruvyl shikimate-3-phosphate and inorganic phosphate.</text>
</comment>
<comment type="catalytic activity">
    <reaction evidence="1">
        <text>3-phosphoshikimate + phosphoenolpyruvate = 5-O-(1-carboxyvinyl)-3-phosphoshikimate + phosphate</text>
        <dbReference type="Rhea" id="RHEA:21256"/>
        <dbReference type="ChEBI" id="CHEBI:43474"/>
        <dbReference type="ChEBI" id="CHEBI:57701"/>
        <dbReference type="ChEBI" id="CHEBI:58702"/>
        <dbReference type="ChEBI" id="CHEBI:145989"/>
        <dbReference type="EC" id="2.5.1.19"/>
    </reaction>
    <physiologicalReaction direction="left-to-right" evidence="1">
        <dbReference type="Rhea" id="RHEA:21257"/>
    </physiologicalReaction>
</comment>
<comment type="pathway">
    <text evidence="1">Metabolic intermediate biosynthesis; chorismate biosynthesis; chorismate from D-erythrose 4-phosphate and phosphoenolpyruvate: step 6/7.</text>
</comment>
<comment type="subunit">
    <text evidence="1">Monomer.</text>
</comment>
<comment type="subcellular location">
    <subcellularLocation>
        <location evidence="1">Cytoplasm</location>
    </subcellularLocation>
</comment>
<comment type="similarity">
    <text evidence="1">Belongs to the EPSP synthase family.</text>
</comment>
<evidence type="ECO:0000255" key="1">
    <source>
        <dbReference type="HAMAP-Rule" id="MF_00210"/>
    </source>
</evidence>
<name>AROA_STRT2</name>